<proteinExistence type="inferred from homology"/>
<keyword id="KW-0067">ATP-binding</keyword>
<keyword id="KW-0347">Helicase</keyword>
<keyword id="KW-0378">Hydrolase</keyword>
<keyword id="KW-0547">Nucleotide-binding</keyword>
<keyword id="KW-0694">RNA-binding</keyword>
<keyword id="KW-0804">Transcription</keyword>
<keyword id="KW-0805">Transcription regulation</keyword>
<keyword id="KW-0806">Transcription termination</keyword>
<gene>
    <name evidence="1" type="primary">rho</name>
    <name type="ordered locus">BUsg_572</name>
</gene>
<reference key="1">
    <citation type="journal article" date="2002" name="Science">
        <title>50 million years of genomic stasis in endosymbiotic bacteria.</title>
        <authorList>
            <person name="Tamas I."/>
            <person name="Klasson L."/>
            <person name="Canbaeck B."/>
            <person name="Naeslund A.K."/>
            <person name="Eriksson A.-S."/>
            <person name="Wernegreen J.J."/>
            <person name="Sandstroem J.P."/>
            <person name="Moran N.A."/>
            <person name="Andersson S.G.E."/>
        </authorList>
    </citation>
    <scope>NUCLEOTIDE SEQUENCE [LARGE SCALE GENOMIC DNA]</scope>
    <source>
        <strain>Sg</strain>
    </source>
</reference>
<reference key="2">
    <citation type="journal article" date="1998" name="Curr. Microbiol.">
        <title>Sequence analysis of a 34.7-kb DNA segment from the genome of Buchnera aphidicola (endosymbiont of aphids) containing groEL, dnaA, the atp operon, gidA, and rho.</title>
        <authorList>
            <person name="Clark M.A."/>
            <person name="Baumann L."/>
            <person name="Baumann P."/>
        </authorList>
    </citation>
    <scope>NUCLEOTIDE SEQUENCE [GENOMIC DNA] OF 1-162</scope>
</reference>
<sequence length="419" mass="46862">MNLTALKNMPVSELITLGEKMGLENLARMRKQDIIFAILKQHAKSGEDIFGDGVLEILQDGFGFLRSADSSYLAGPDDIYVSPSQIRRFNLRTGDTISGKIRPPKEGERYFALLKVNAVNYDKPENARSKILFENLTPLHANSRLRMERGNGSTEDLTARVLDLASPIGRGQRGLIVAPPKAGKTILLQNIAQSIAYNHPDCVLMVLLIDERPEEVTEMQRLVKGEVVASTFDEPASRHVQVAEMVIEKAKRLVEHKKDVIILLDSITRLARAYNTVVPASGKVLTGGVDANALHRPKRFFGAARNVEEGGSLTIIATALVDTGSKMDEVIYEEFKGTGNMELPLSRKIAEKRVFPAIDYNRSGTRKEELLTLPDELQKMWILRKIIHPMSEIDAMEFLLNKLSMTKTNDEFFDMMKRS</sequence>
<name>RHO_BUCAP</name>
<comment type="function">
    <text evidence="1">Facilitates transcription termination by a mechanism that involves Rho binding to the nascent RNA, activation of Rho's RNA-dependent ATPase activity, and release of the mRNA from the DNA template.</text>
</comment>
<comment type="subunit">
    <text evidence="1">Homohexamer. The homohexamer assembles into an open ring structure.</text>
</comment>
<comment type="similarity">
    <text evidence="1">Belongs to the Rho family.</text>
</comment>
<dbReference type="EC" id="3.6.4.-" evidence="1"/>
<dbReference type="EMBL" id="AE013218">
    <property type="protein sequence ID" value="AAM68106.1"/>
    <property type="molecule type" value="Genomic_DNA"/>
</dbReference>
<dbReference type="EMBL" id="AF008210">
    <property type="protein sequence ID" value="AAC38129.1"/>
    <property type="molecule type" value="Genomic_DNA"/>
</dbReference>
<dbReference type="RefSeq" id="WP_011054072.1">
    <property type="nucleotide sequence ID" value="NC_004061.1"/>
</dbReference>
<dbReference type="SMR" id="O51891"/>
<dbReference type="STRING" id="198804.BUsg_572"/>
<dbReference type="GeneID" id="93004053"/>
<dbReference type="KEGG" id="bas:BUsg_572"/>
<dbReference type="eggNOG" id="COG1158">
    <property type="taxonomic scope" value="Bacteria"/>
</dbReference>
<dbReference type="HOGENOM" id="CLU_016377_4_3_6"/>
<dbReference type="Proteomes" id="UP000000416">
    <property type="component" value="Chromosome"/>
</dbReference>
<dbReference type="GO" id="GO:0005829">
    <property type="term" value="C:cytosol"/>
    <property type="evidence" value="ECO:0007669"/>
    <property type="project" value="UniProtKB-ARBA"/>
</dbReference>
<dbReference type="GO" id="GO:0005524">
    <property type="term" value="F:ATP binding"/>
    <property type="evidence" value="ECO:0007669"/>
    <property type="project" value="UniProtKB-UniRule"/>
</dbReference>
<dbReference type="GO" id="GO:0016887">
    <property type="term" value="F:ATP hydrolysis activity"/>
    <property type="evidence" value="ECO:0007669"/>
    <property type="project" value="InterPro"/>
</dbReference>
<dbReference type="GO" id="GO:0008186">
    <property type="term" value="F:ATP-dependent activity, acting on RNA"/>
    <property type="evidence" value="ECO:0007669"/>
    <property type="project" value="InterPro"/>
</dbReference>
<dbReference type="GO" id="GO:0004386">
    <property type="term" value="F:helicase activity"/>
    <property type="evidence" value="ECO:0007669"/>
    <property type="project" value="UniProtKB-UniRule"/>
</dbReference>
<dbReference type="GO" id="GO:0003723">
    <property type="term" value="F:RNA binding"/>
    <property type="evidence" value="ECO:0007669"/>
    <property type="project" value="UniProtKB-UniRule"/>
</dbReference>
<dbReference type="GO" id="GO:0006353">
    <property type="term" value="P:DNA-templated transcription termination"/>
    <property type="evidence" value="ECO:0007669"/>
    <property type="project" value="UniProtKB-UniRule"/>
</dbReference>
<dbReference type="CDD" id="cd04459">
    <property type="entry name" value="Rho_CSD"/>
    <property type="match status" value="1"/>
</dbReference>
<dbReference type="CDD" id="cd01128">
    <property type="entry name" value="rho_factor_C"/>
    <property type="match status" value="1"/>
</dbReference>
<dbReference type="FunFam" id="1.10.720.10:FF:000001">
    <property type="entry name" value="Transcription termination factor Rho"/>
    <property type="match status" value="1"/>
</dbReference>
<dbReference type="FunFam" id="2.40.50.140:FF:000010">
    <property type="entry name" value="Transcription termination factor Rho"/>
    <property type="match status" value="1"/>
</dbReference>
<dbReference type="FunFam" id="3.40.50.300:FF:000072">
    <property type="entry name" value="Transcription termination factor Rho"/>
    <property type="match status" value="1"/>
</dbReference>
<dbReference type="Gene3D" id="1.10.720.10">
    <property type="match status" value="1"/>
</dbReference>
<dbReference type="Gene3D" id="2.40.50.140">
    <property type="entry name" value="Nucleic acid-binding proteins"/>
    <property type="match status" value="1"/>
</dbReference>
<dbReference type="Gene3D" id="3.40.50.300">
    <property type="entry name" value="P-loop containing nucleotide triphosphate hydrolases"/>
    <property type="match status" value="1"/>
</dbReference>
<dbReference type="HAMAP" id="MF_01884">
    <property type="entry name" value="Rho"/>
    <property type="match status" value="1"/>
</dbReference>
<dbReference type="InterPro" id="IPR003593">
    <property type="entry name" value="AAA+_ATPase"/>
</dbReference>
<dbReference type="InterPro" id="IPR000194">
    <property type="entry name" value="ATPase_F1/V1/A1_a/bsu_nucl-bd"/>
</dbReference>
<dbReference type="InterPro" id="IPR011129">
    <property type="entry name" value="CSD"/>
</dbReference>
<dbReference type="InterPro" id="IPR012340">
    <property type="entry name" value="NA-bd_OB-fold"/>
</dbReference>
<dbReference type="InterPro" id="IPR027417">
    <property type="entry name" value="P-loop_NTPase"/>
</dbReference>
<dbReference type="InterPro" id="IPR011112">
    <property type="entry name" value="Rho-like_N"/>
</dbReference>
<dbReference type="InterPro" id="IPR041703">
    <property type="entry name" value="Rho_factor_ATP-bd"/>
</dbReference>
<dbReference type="InterPro" id="IPR036269">
    <property type="entry name" value="Rho_N_sf"/>
</dbReference>
<dbReference type="InterPro" id="IPR011113">
    <property type="entry name" value="Rho_RNA-bd"/>
</dbReference>
<dbReference type="InterPro" id="IPR004665">
    <property type="entry name" value="Term_rho"/>
</dbReference>
<dbReference type="NCBIfam" id="NF006886">
    <property type="entry name" value="PRK09376.1"/>
    <property type="match status" value="1"/>
</dbReference>
<dbReference type="NCBIfam" id="TIGR00767">
    <property type="entry name" value="rho"/>
    <property type="match status" value="1"/>
</dbReference>
<dbReference type="PANTHER" id="PTHR46425">
    <property type="entry name" value="TRANSCRIPTION TERMINATION FACTOR RHO"/>
    <property type="match status" value="1"/>
</dbReference>
<dbReference type="PANTHER" id="PTHR46425:SF1">
    <property type="entry name" value="TRANSCRIPTION TERMINATION FACTOR RHO"/>
    <property type="match status" value="1"/>
</dbReference>
<dbReference type="Pfam" id="PF00006">
    <property type="entry name" value="ATP-synt_ab"/>
    <property type="match status" value="1"/>
</dbReference>
<dbReference type="Pfam" id="PF07498">
    <property type="entry name" value="Rho_N"/>
    <property type="match status" value="1"/>
</dbReference>
<dbReference type="Pfam" id="PF07497">
    <property type="entry name" value="Rho_RNA_bind"/>
    <property type="match status" value="1"/>
</dbReference>
<dbReference type="SMART" id="SM00382">
    <property type="entry name" value="AAA"/>
    <property type="match status" value="1"/>
</dbReference>
<dbReference type="SMART" id="SM00357">
    <property type="entry name" value="CSP"/>
    <property type="match status" value="1"/>
</dbReference>
<dbReference type="SMART" id="SM00959">
    <property type="entry name" value="Rho_N"/>
    <property type="match status" value="1"/>
</dbReference>
<dbReference type="SUPFAM" id="SSF50249">
    <property type="entry name" value="Nucleic acid-binding proteins"/>
    <property type="match status" value="1"/>
</dbReference>
<dbReference type="SUPFAM" id="SSF52540">
    <property type="entry name" value="P-loop containing nucleoside triphosphate hydrolases"/>
    <property type="match status" value="1"/>
</dbReference>
<dbReference type="SUPFAM" id="SSF68912">
    <property type="entry name" value="Rho N-terminal domain-like"/>
    <property type="match status" value="1"/>
</dbReference>
<dbReference type="PROSITE" id="PS51856">
    <property type="entry name" value="RHO_RNA_BD"/>
    <property type="match status" value="1"/>
</dbReference>
<evidence type="ECO:0000255" key="1">
    <source>
        <dbReference type="HAMAP-Rule" id="MF_01884"/>
    </source>
</evidence>
<evidence type="ECO:0000255" key="2">
    <source>
        <dbReference type="PROSITE-ProRule" id="PRU01203"/>
    </source>
</evidence>
<organism>
    <name type="scientific">Buchnera aphidicola subsp. Schizaphis graminum (strain Sg)</name>
    <dbReference type="NCBI Taxonomy" id="198804"/>
    <lineage>
        <taxon>Bacteria</taxon>
        <taxon>Pseudomonadati</taxon>
        <taxon>Pseudomonadota</taxon>
        <taxon>Gammaproteobacteria</taxon>
        <taxon>Enterobacterales</taxon>
        <taxon>Erwiniaceae</taxon>
        <taxon>Buchnera</taxon>
    </lineage>
</organism>
<accession>O51891</accession>
<protein>
    <recommendedName>
        <fullName evidence="1">Transcription termination factor Rho</fullName>
        <ecNumber evidence="1">3.6.4.-</ecNumber>
    </recommendedName>
    <alternativeName>
        <fullName evidence="1">ATP-dependent helicase Rho</fullName>
    </alternativeName>
</protein>
<feature type="chain" id="PRO_0000188958" description="Transcription termination factor Rho">
    <location>
        <begin position="1"/>
        <end position="419"/>
    </location>
</feature>
<feature type="domain" description="Rho RNA-BD" evidence="2">
    <location>
        <begin position="48"/>
        <end position="123"/>
    </location>
</feature>
<feature type="region of interest" description="RNA-binding 1" evidence="1">
    <location>
        <begin position="61"/>
        <end position="66"/>
    </location>
</feature>
<feature type="region of interest" description="RNA-binding 1" evidence="1">
    <location>
        <begin position="78"/>
        <end position="80"/>
    </location>
</feature>
<feature type="region of interest" description="RNA-binding 1" evidence="1">
    <location>
        <begin position="108"/>
        <end position="110"/>
    </location>
</feature>
<feature type="region of interest" description="RNA-binding 2" evidence="1">
    <location>
        <begin position="284"/>
        <end position="288"/>
    </location>
</feature>
<feature type="binding site" evidence="1">
    <location>
        <begin position="169"/>
        <end position="174"/>
    </location>
    <ligand>
        <name>ATP</name>
        <dbReference type="ChEBI" id="CHEBI:30616"/>
    </ligand>
</feature>
<feature type="binding site" evidence="1">
    <location>
        <begin position="181"/>
        <end position="186"/>
    </location>
    <ligand>
        <name>ATP</name>
        <dbReference type="ChEBI" id="CHEBI:30616"/>
    </ligand>
</feature>
<feature type="binding site" evidence="1">
    <location>
        <position position="212"/>
    </location>
    <ligand>
        <name>ATP</name>
        <dbReference type="ChEBI" id="CHEBI:30616"/>
    </ligand>
</feature>
<feature type="site" description="RNA-binding 2" evidence="1">
    <location>
        <position position="326"/>
    </location>
</feature>